<sequence>MTGHATVWGVRISRVVPGRAVTGDEVRELLSGTGATVREAVRLAELTTLRVGGPAVLAECGTTEALVATVRALDAAGVPVLLLAGGSNLLVGDDGFDGVVVRVATSGVELGADGVLAEAGADWDAVVAATVAAGLGGLECLSGIPGSAGATPVQNVGAYGVEVAELLRRVRLLDRATGEIRWAGPGELGFGYRTSVLKHSDAAVVLAVEFALRPDGSSAPLRYRELAAALAADEGESRPAAAVREAVLRLRASKGMVLDPADHDTWSAGSFFTNPVVPADRIEQVRAAIHAHVGEVTIPTYPAADGVKLSAGWLIERAGFGKGWPGAEAPARLSTKHTLALTNRGTARAADVVALARTVRDGVAERFGIRLEPEPVTVGVRL</sequence>
<comment type="function">
    <text evidence="1">Cell wall formation.</text>
</comment>
<comment type="catalytic activity">
    <reaction evidence="1">
        <text>UDP-N-acetyl-alpha-D-muramate + NADP(+) = UDP-N-acetyl-3-O-(1-carboxyvinyl)-alpha-D-glucosamine + NADPH + H(+)</text>
        <dbReference type="Rhea" id="RHEA:12248"/>
        <dbReference type="ChEBI" id="CHEBI:15378"/>
        <dbReference type="ChEBI" id="CHEBI:57783"/>
        <dbReference type="ChEBI" id="CHEBI:58349"/>
        <dbReference type="ChEBI" id="CHEBI:68483"/>
        <dbReference type="ChEBI" id="CHEBI:70757"/>
        <dbReference type="EC" id="1.3.1.98"/>
    </reaction>
</comment>
<comment type="cofactor">
    <cofactor evidence="1">
        <name>FAD</name>
        <dbReference type="ChEBI" id="CHEBI:57692"/>
    </cofactor>
</comment>
<comment type="pathway">
    <text evidence="1">Cell wall biogenesis; peptidoglycan biosynthesis.</text>
</comment>
<comment type="subcellular location">
    <subcellularLocation>
        <location evidence="1">Cytoplasm</location>
    </subcellularLocation>
</comment>
<comment type="similarity">
    <text evidence="1">Belongs to the MurB family.</text>
</comment>
<proteinExistence type="inferred from homology"/>
<evidence type="ECO:0000255" key="1">
    <source>
        <dbReference type="HAMAP-Rule" id="MF_00037"/>
    </source>
</evidence>
<reference key="1">
    <citation type="journal article" date="2004" name="Proc. Natl. Acad. Sci. U.S.A.">
        <title>The complete genomic sequence of Nocardia farcinica IFM 10152.</title>
        <authorList>
            <person name="Ishikawa J."/>
            <person name="Yamashita A."/>
            <person name="Mikami Y."/>
            <person name="Hoshino Y."/>
            <person name="Kurita H."/>
            <person name="Hotta K."/>
            <person name="Shiba T."/>
            <person name="Hattori M."/>
        </authorList>
    </citation>
    <scope>NUCLEOTIDE SEQUENCE [LARGE SCALE GENOMIC DNA]</scope>
    <source>
        <strain>IFM 10152</strain>
    </source>
</reference>
<dbReference type="EC" id="1.3.1.98" evidence="1"/>
<dbReference type="EMBL" id="AP006618">
    <property type="protein sequence ID" value="BAD60049.1"/>
    <property type="molecule type" value="Genomic_DNA"/>
</dbReference>
<dbReference type="SMR" id="Q5YP42"/>
<dbReference type="STRING" id="247156.NFA_51970"/>
<dbReference type="KEGG" id="nfa:NFA_51970"/>
<dbReference type="eggNOG" id="COG0812">
    <property type="taxonomic scope" value="Bacteria"/>
</dbReference>
<dbReference type="HOGENOM" id="CLU_035304_0_1_11"/>
<dbReference type="UniPathway" id="UPA00219"/>
<dbReference type="Proteomes" id="UP000006820">
    <property type="component" value="Chromosome"/>
</dbReference>
<dbReference type="GO" id="GO:0005829">
    <property type="term" value="C:cytosol"/>
    <property type="evidence" value="ECO:0007669"/>
    <property type="project" value="TreeGrafter"/>
</dbReference>
<dbReference type="GO" id="GO:0071949">
    <property type="term" value="F:FAD binding"/>
    <property type="evidence" value="ECO:0007669"/>
    <property type="project" value="InterPro"/>
</dbReference>
<dbReference type="GO" id="GO:0008762">
    <property type="term" value="F:UDP-N-acetylmuramate dehydrogenase activity"/>
    <property type="evidence" value="ECO:0007669"/>
    <property type="project" value="UniProtKB-UniRule"/>
</dbReference>
<dbReference type="GO" id="GO:0051301">
    <property type="term" value="P:cell division"/>
    <property type="evidence" value="ECO:0007669"/>
    <property type="project" value="UniProtKB-KW"/>
</dbReference>
<dbReference type="GO" id="GO:0071555">
    <property type="term" value="P:cell wall organization"/>
    <property type="evidence" value="ECO:0007669"/>
    <property type="project" value="UniProtKB-KW"/>
</dbReference>
<dbReference type="GO" id="GO:0009252">
    <property type="term" value="P:peptidoglycan biosynthetic process"/>
    <property type="evidence" value="ECO:0007669"/>
    <property type="project" value="UniProtKB-UniRule"/>
</dbReference>
<dbReference type="GO" id="GO:0008360">
    <property type="term" value="P:regulation of cell shape"/>
    <property type="evidence" value="ECO:0007669"/>
    <property type="project" value="UniProtKB-KW"/>
</dbReference>
<dbReference type="Gene3D" id="3.30.465.10">
    <property type="match status" value="1"/>
</dbReference>
<dbReference type="Gene3D" id="3.90.78.10">
    <property type="entry name" value="UDP-N-acetylenolpyruvoylglucosamine reductase, C-terminal domain"/>
    <property type="match status" value="1"/>
</dbReference>
<dbReference type="Gene3D" id="3.30.43.10">
    <property type="entry name" value="Uridine Diphospho-n-acetylenolpyruvylglucosamine Reductase, domain 2"/>
    <property type="match status" value="1"/>
</dbReference>
<dbReference type="HAMAP" id="MF_00037">
    <property type="entry name" value="MurB"/>
    <property type="match status" value="1"/>
</dbReference>
<dbReference type="InterPro" id="IPR016166">
    <property type="entry name" value="FAD-bd_PCMH"/>
</dbReference>
<dbReference type="InterPro" id="IPR036318">
    <property type="entry name" value="FAD-bd_PCMH-like_sf"/>
</dbReference>
<dbReference type="InterPro" id="IPR016167">
    <property type="entry name" value="FAD-bd_PCMH_sub1"/>
</dbReference>
<dbReference type="InterPro" id="IPR016169">
    <property type="entry name" value="FAD-bd_PCMH_sub2"/>
</dbReference>
<dbReference type="InterPro" id="IPR003170">
    <property type="entry name" value="MurB"/>
</dbReference>
<dbReference type="InterPro" id="IPR011601">
    <property type="entry name" value="MurB_C"/>
</dbReference>
<dbReference type="InterPro" id="IPR036635">
    <property type="entry name" value="MurB_C_sf"/>
</dbReference>
<dbReference type="InterPro" id="IPR006094">
    <property type="entry name" value="Oxid_FAD_bind_N"/>
</dbReference>
<dbReference type="NCBIfam" id="TIGR00179">
    <property type="entry name" value="murB"/>
    <property type="match status" value="1"/>
</dbReference>
<dbReference type="NCBIfam" id="NF010478">
    <property type="entry name" value="PRK13903.1"/>
    <property type="match status" value="1"/>
</dbReference>
<dbReference type="PANTHER" id="PTHR21071">
    <property type="entry name" value="UDP-N-ACETYLENOLPYRUVOYLGLUCOSAMINE REDUCTASE"/>
    <property type="match status" value="1"/>
</dbReference>
<dbReference type="PANTHER" id="PTHR21071:SF4">
    <property type="entry name" value="UDP-N-ACETYLENOLPYRUVOYLGLUCOSAMINE REDUCTASE"/>
    <property type="match status" value="1"/>
</dbReference>
<dbReference type="Pfam" id="PF01565">
    <property type="entry name" value="FAD_binding_4"/>
    <property type="match status" value="1"/>
</dbReference>
<dbReference type="Pfam" id="PF02873">
    <property type="entry name" value="MurB_C"/>
    <property type="match status" value="1"/>
</dbReference>
<dbReference type="SUPFAM" id="SSF56176">
    <property type="entry name" value="FAD-binding/transporter-associated domain-like"/>
    <property type="match status" value="1"/>
</dbReference>
<dbReference type="SUPFAM" id="SSF56194">
    <property type="entry name" value="Uridine diphospho-N-Acetylenolpyruvylglucosamine reductase, MurB, C-terminal domain"/>
    <property type="match status" value="1"/>
</dbReference>
<dbReference type="PROSITE" id="PS51387">
    <property type="entry name" value="FAD_PCMH"/>
    <property type="match status" value="1"/>
</dbReference>
<organism>
    <name type="scientific">Nocardia farcinica (strain IFM 10152)</name>
    <dbReference type="NCBI Taxonomy" id="247156"/>
    <lineage>
        <taxon>Bacteria</taxon>
        <taxon>Bacillati</taxon>
        <taxon>Actinomycetota</taxon>
        <taxon>Actinomycetes</taxon>
        <taxon>Mycobacteriales</taxon>
        <taxon>Nocardiaceae</taxon>
        <taxon>Nocardia</taxon>
    </lineage>
</organism>
<keyword id="KW-0131">Cell cycle</keyword>
<keyword id="KW-0132">Cell division</keyword>
<keyword id="KW-0133">Cell shape</keyword>
<keyword id="KW-0961">Cell wall biogenesis/degradation</keyword>
<keyword id="KW-0963">Cytoplasm</keyword>
<keyword id="KW-0274">FAD</keyword>
<keyword id="KW-0285">Flavoprotein</keyword>
<keyword id="KW-0521">NADP</keyword>
<keyword id="KW-0560">Oxidoreductase</keyword>
<keyword id="KW-0573">Peptidoglycan synthesis</keyword>
<keyword id="KW-1185">Reference proteome</keyword>
<name>MURB_NOCFA</name>
<gene>
    <name evidence="1" type="primary">murB</name>
    <name type="ordered locus">NFA_51970</name>
</gene>
<feature type="chain" id="PRO_0000224699" description="UDP-N-acetylenolpyruvoylglucosamine reductase">
    <location>
        <begin position="1"/>
        <end position="382"/>
    </location>
</feature>
<feature type="domain" description="FAD-binding PCMH-type" evidence="1">
    <location>
        <begin position="50"/>
        <end position="253"/>
    </location>
</feature>
<feature type="active site" evidence="1">
    <location>
        <position position="193"/>
    </location>
</feature>
<feature type="active site" description="Proton donor" evidence="1">
    <location>
        <position position="270"/>
    </location>
</feature>
<feature type="active site" evidence="1">
    <location>
        <position position="374"/>
    </location>
</feature>
<protein>
    <recommendedName>
        <fullName evidence="1">UDP-N-acetylenolpyruvoylglucosamine reductase</fullName>
        <ecNumber evidence="1">1.3.1.98</ecNumber>
    </recommendedName>
    <alternativeName>
        <fullName evidence="1">UDP-N-acetylmuramate dehydrogenase</fullName>
    </alternativeName>
</protein>
<accession>Q5YP42</accession>